<sequence length="592" mass="66455">MNNGRIVRINGPLVVADNMKNAQMYEVVEVGEPRLIGEITRIEGDRAFIQVYEDTSGIKPNEPVYRTGAPLSIELGPGLIGKIFDGLQRPLDSIKELTKSPFIARGIKVPSVDRKTKWHFIPKVKKGDKIEGGDIIGIVNETPLVEHRILVPPYVHGTLKEIVAEGDYTVEDPIAVVDMNGDEVPIRLMQRWPVRIPRPFREKLEPTEPLLTGTRVLDTIFPIAKGGTAAIPGPFGSGKTVTLQSLAKWSAAKIVIYVGCGERGNEMTDELRQFPSLKDPWTGRPLLERTILVANTSNMPVAAREASIYVGITMAEYFRDQGYDTLLVADSTSRWAEALRDLGGRMEEMPAEEGFPSYLPSRLAEYYERAGRVKTVGKPERFGSVTVASAVSPPGGDFTEPVTSQTLRFVKVFWPLDVSLAQARHYPAINWLQGFSAYVDLVANWWNTNVDPKWREMRDMMVRTLIREDELRQIVRLVGPESLAEKDKLVLETARLIKEAFLKQNAYDDIDAFSSPQKQARVMRLIYLFNTHASRLVERGIPTKKIVDSMGQLLPEIIRSKAAIKNDELNKYDELERKLISVFENLEKEAGT</sequence>
<dbReference type="EC" id="7.1.2.2" evidence="1"/>
<dbReference type="EMBL" id="CP001404">
    <property type="protein sequence ID" value="ACP48361.1"/>
    <property type="molecule type" value="Genomic_DNA"/>
</dbReference>
<dbReference type="RefSeq" id="WP_012717392.1">
    <property type="nucleotide sequence ID" value="NC_012623.1"/>
</dbReference>
<dbReference type="SMR" id="C3NGV1"/>
<dbReference type="GeneID" id="7810925"/>
<dbReference type="KEGG" id="sin:YN1551_1266"/>
<dbReference type="HOGENOM" id="CLU_008162_3_1_2"/>
<dbReference type="Proteomes" id="UP000006818">
    <property type="component" value="Chromosome"/>
</dbReference>
<dbReference type="GO" id="GO:0005886">
    <property type="term" value="C:plasma membrane"/>
    <property type="evidence" value="ECO:0007669"/>
    <property type="project" value="UniProtKB-SubCell"/>
</dbReference>
<dbReference type="GO" id="GO:0033178">
    <property type="term" value="C:proton-transporting two-sector ATPase complex, catalytic domain"/>
    <property type="evidence" value="ECO:0007669"/>
    <property type="project" value="InterPro"/>
</dbReference>
<dbReference type="GO" id="GO:0005524">
    <property type="term" value="F:ATP binding"/>
    <property type="evidence" value="ECO:0007669"/>
    <property type="project" value="UniProtKB-UniRule"/>
</dbReference>
<dbReference type="GO" id="GO:0016887">
    <property type="term" value="F:ATP hydrolysis activity"/>
    <property type="evidence" value="ECO:0007669"/>
    <property type="project" value="InterPro"/>
</dbReference>
<dbReference type="GO" id="GO:0046933">
    <property type="term" value="F:proton-transporting ATP synthase activity, rotational mechanism"/>
    <property type="evidence" value="ECO:0007669"/>
    <property type="project" value="UniProtKB-UniRule"/>
</dbReference>
<dbReference type="GO" id="GO:0046961">
    <property type="term" value="F:proton-transporting ATPase activity, rotational mechanism"/>
    <property type="evidence" value="ECO:0007669"/>
    <property type="project" value="InterPro"/>
</dbReference>
<dbReference type="GO" id="GO:0042777">
    <property type="term" value="P:proton motive force-driven plasma membrane ATP synthesis"/>
    <property type="evidence" value="ECO:0007669"/>
    <property type="project" value="UniProtKB-UniRule"/>
</dbReference>
<dbReference type="CDD" id="cd18111">
    <property type="entry name" value="ATP-synt_V_A-type_alpha_C"/>
    <property type="match status" value="1"/>
</dbReference>
<dbReference type="CDD" id="cd18119">
    <property type="entry name" value="ATP-synt_V_A-type_alpha_N"/>
    <property type="match status" value="1"/>
</dbReference>
<dbReference type="CDD" id="cd01134">
    <property type="entry name" value="V_A-ATPase_A"/>
    <property type="match status" value="1"/>
</dbReference>
<dbReference type="FunFam" id="1.10.1140.10:FF:000002">
    <property type="entry name" value="V-type proton ATPase catalytic subunit A"/>
    <property type="match status" value="1"/>
</dbReference>
<dbReference type="FunFam" id="2.40.30.20:FF:000002">
    <property type="entry name" value="V-type proton ATPase catalytic subunit A"/>
    <property type="match status" value="1"/>
</dbReference>
<dbReference type="FunFam" id="2.40.50.100:FF:000008">
    <property type="entry name" value="V-type proton ATPase catalytic subunit A"/>
    <property type="match status" value="1"/>
</dbReference>
<dbReference type="Gene3D" id="2.40.30.20">
    <property type="match status" value="1"/>
</dbReference>
<dbReference type="Gene3D" id="2.40.50.100">
    <property type="match status" value="1"/>
</dbReference>
<dbReference type="Gene3D" id="1.10.1140.10">
    <property type="entry name" value="Bovine Mitochondrial F1-atpase, Atp Synthase Beta Chain, Chain D, domain 3"/>
    <property type="match status" value="1"/>
</dbReference>
<dbReference type="Gene3D" id="3.40.50.300">
    <property type="entry name" value="P-loop containing nucleotide triphosphate hydrolases"/>
    <property type="match status" value="1"/>
</dbReference>
<dbReference type="HAMAP" id="MF_00309">
    <property type="entry name" value="ATP_synth_A_arch"/>
    <property type="match status" value="1"/>
</dbReference>
<dbReference type="InterPro" id="IPR003593">
    <property type="entry name" value="AAA+_ATPase"/>
</dbReference>
<dbReference type="InterPro" id="IPR055190">
    <property type="entry name" value="ATP-synt_VA_C"/>
</dbReference>
<dbReference type="InterPro" id="IPR031686">
    <property type="entry name" value="ATP-synth_a_Xtn"/>
</dbReference>
<dbReference type="InterPro" id="IPR023366">
    <property type="entry name" value="ATP_synth_asu-like_sf"/>
</dbReference>
<dbReference type="InterPro" id="IPR005726">
    <property type="entry name" value="ATP_synth_asu_arc"/>
</dbReference>
<dbReference type="InterPro" id="IPR004100">
    <property type="entry name" value="ATPase_F1/V1/A1_a/bsu_N"/>
</dbReference>
<dbReference type="InterPro" id="IPR036121">
    <property type="entry name" value="ATPase_F1/V1/A1_a/bsu_N_sf"/>
</dbReference>
<dbReference type="InterPro" id="IPR000194">
    <property type="entry name" value="ATPase_F1/V1/A1_a/bsu_nucl-bd"/>
</dbReference>
<dbReference type="InterPro" id="IPR024034">
    <property type="entry name" value="ATPase_F1/V1_b/a_C"/>
</dbReference>
<dbReference type="InterPro" id="IPR027417">
    <property type="entry name" value="P-loop_NTPase"/>
</dbReference>
<dbReference type="InterPro" id="IPR022878">
    <property type="entry name" value="V-ATPase_asu"/>
</dbReference>
<dbReference type="NCBIfam" id="TIGR01043">
    <property type="entry name" value="ATP_syn_A_arch"/>
    <property type="match status" value="1"/>
</dbReference>
<dbReference type="NCBIfam" id="NF003220">
    <property type="entry name" value="PRK04192.1"/>
    <property type="match status" value="1"/>
</dbReference>
<dbReference type="PANTHER" id="PTHR43607:SF1">
    <property type="entry name" value="H(+)-TRANSPORTING TWO-SECTOR ATPASE"/>
    <property type="match status" value="1"/>
</dbReference>
<dbReference type="PANTHER" id="PTHR43607">
    <property type="entry name" value="V-TYPE PROTON ATPASE CATALYTIC SUBUNIT A"/>
    <property type="match status" value="1"/>
</dbReference>
<dbReference type="Pfam" id="PF00006">
    <property type="entry name" value="ATP-synt_ab"/>
    <property type="match status" value="1"/>
</dbReference>
<dbReference type="Pfam" id="PF02874">
    <property type="entry name" value="ATP-synt_ab_N"/>
    <property type="match status" value="1"/>
</dbReference>
<dbReference type="Pfam" id="PF16886">
    <property type="entry name" value="ATP-synt_ab_Xtn"/>
    <property type="match status" value="1"/>
</dbReference>
<dbReference type="Pfam" id="PF22919">
    <property type="entry name" value="ATP-synt_VA_C"/>
    <property type="match status" value="1"/>
</dbReference>
<dbReference type="SMART" id="SM00382">
    <property type="entry name" value="AAA"/>
    <property type="match status" value="1"/>
</dbReference>
<dbReference type="SUPFAM" id="SSF47917">
    <property type="entry name" value="C-terminal domain of alpha and beta subunits of F1 ATP synthase"/>
    <property type="match status" value="1"/>
</dbReference>
<dbReference type="SUPFAM" id="SSF50615">
    <property type="entry name" value="N-terminal domain of alpha and beta subunits of F1 ATP synthase"/>
    <property type="match status" value="1"/>
</dbReference>
<dbReference type="SUPFAM" id="SSF52540">
    <property type="entry name" value="P-loop containing nucleoside triphosphate hydrolases"/>
    <property type="match status" value="1"/>
</dbReference>
<protein>
    <recommendedName>
        <fullName evidence="1">A-type ATP synthase subunit A</fullName>
        <ecNumber evidence="1">7.1.2.2</ecNumber>
    </recommendedName>
</protein>
<gene>
    <name evidence="1" type="primary">atpA</name>
    <name type="ordered locus">YN1551_1266</name>
</gene>
<proteinExistence type="inferred from homology"/>
<name>AATA_SACI1</name>
<comment type="function">
    <text evidence="1">Component of the A-type ATP synthase that produces ATP from ADP in the presence of a proton gradient across the membrane. The A chain is the catalytic subunit.</text>
</comment>
<comment type="catalytic activity">
    <reaction evidence="1">
        <text>ATP + H2O + 4 H(+)(in) = ADP + phosphate + 5 H(+)(out)</text>
        <dbReference type="Rhea" id="RHEA:57720"/>
        <dbReference type="ChEBI" id="CHEBI:15377"/>
        <dbReference type="ChEBI" id="CHEBI:15378"/>
        <dbReference type="ChEBI" id="CHEBI:30616"/>
        <dbReference type="ChEBI" id="CHEBI:43474"/>
        <dbReference type="ChEBI" id="CHEBI:456216"/>
        <dbReference type="EC" id="7.1.2.2"/>
    </reaction>
</comment>
<comment type="subunit">
    <text evidence="1">Has multiple subunits with at least A(3), B(3), C, D, E, F, H, I and proteolipid K(x).</text>
</comment>
<comment type="subcellular location">
    <subcellularLocation>
        <location evidence="1">Cell membrane</location>
        <topology evidence="1">Peripheral membrane protein</topology>
    </subcellularLocation>
</comment>
<comment type="similarity">
    <text evidence="1">Belongs to the ATPase alpha/beta chains family.</text>
</comment>
<evidence type="ECO:0000255" key="1">
    <source>
        <dbReference type="HAMAP-Rule" id="MF_00309"/>
    </source>
</evidence>
<feature type="chain" id="PRO_1000205036" description="A-type ATP synthase subunit A">
    <location>
        <begin position="1"/>
        <end position="592"/>
    </location>
</feature>
<feature type="binding site" evidence="1">
    <location>
        <begin position="233"/>
        <end position="240"/>
    </location>
    <ligand>
        <name>ATP</name>
        <dbReference type="ChEBI" id="CHEBI:30616"/>
    </ligand>
</feature>
<organism>
    <name type="scientific">Saccharolobus islandicus (strain Y.N.15.51 / Yellowstone #2)</name>
    <name type="common">Sulfolobus islandicus</name>
    <dbReference type="NCBI Taxonomy" id="419942"/>
    <lineage>
        <taxon>Archaea</taxon>
        <taxon>Thermoproteota</taxon>
        <taxon>Thermoprotei</taxon>
        <taxon>Sulfolobales</taxon>
        <taxon>Sulfolobaceae</taxon>
        <taxon>Saccharolobus</taxon>
    </lineage>
</organism>
<keyword id="KW-0066">ATP synthesis</keyword>
<keyword id="KW-0067">ATP-binding</keyword>
<keyword id="KW-1003">Cell membrane</keyword>
<keyword id="KW-0375">Hydrogen ion transport</keyword>
<keyword id="KW-0406">Ion transport</keyword>
<keyword id="KW-0472">Membrane</keyword>
<keyword id="KW-0547">Nucleotide-binding</keyword>
<keyword id="KW-1278">Translocase</keyword>
<keyword id="KW-0813">Transport</keyword>
<accession>C3NGV1</accession>
<reference key="1">
    <citation type="journal article" date="2009" name="Proc. Natl. Acad. Sci. U.S.A.">
        <title>Biogeography of the Sulfolobus islandicus pan-genome.</title>
        <authorList>
            <person name="Reno M.L."/>
            <person name="Held N.L."/>
            <person name="Fields C.J."/>
            <person name="Burke P.V."/>
            <person name="Whitaker R.J."/>
        </authorList>
    </citation>
    <scope>NUCLEOTIDE SEQUENCE [LARGE SCALE GENOMIC DNA]</scope>
    <source>
        <strain>Y.N.15.51 / Yellowstone #2</strain>
    </source>
</reference>